<gene>
    <name evidence="1" type="primary">hcaD</name>
    <name type="ordered locus">plu2209</name>
</gene>
<reference key="1">
    <citation type="journal article" date="2003" name="Nat. Biotechnol.">
        <title>The genome sequence of the entomopathogenic bacterium Photorhabdus luminescens.</title>
        <authorList>
            <person name="Duchaud E."/>
            <person name="Rusniok C."/>
            <person name="Frangeul L."/>
            <person name="Buchrieser C."/>
            <person name="Givaudan A."/>
            <person name="Taourit S."/>
            <person name="Bocs S."/>
            <person name="Boursaux-Eude C."/>
            <person name="Chandler M."/>
            <person name="Charles J.-F."/>
            <person name="Dassa E."/>
            <person name="Derose R."/>
            <person name="Derzelle S."/>
            <person name="Freyssinet G."/>
            <person name="Gaudriault S."/>
            <person name="Medigue C."/>
            <person name="Lanois A."/>
            <person name="Powell K."/>
            <person name="Siguier P."/>
            <person name="Vincent R."/>
            <person name="Wingate V."/>
            <person name="Zouine M."/>
            <person name="Glaser P."/>
            <person name="Boemare N."/>
            <person name="Danchin A."/>
            <person name="Kunst F."/>
        </authorList>
    </citation>
    <scope>NUCLEOTIDE SEQUENCE [LARGE SCALE GENOMIC DNA]</scope>
    <source>
        <strain>DSM 15139 / CIP 105565 / TT01</strain>
    </source>
</reference>
<keyword id="KW-0058">Aromatic hydrocarbons catabolism</keyword>
<keyword id="KW-0274">FAD</keyword>
<keyword id="KW-0285">Flavoprotein</keyword>
<keyword id="KW-0520">NAD</keyword>
<keyword id="KW-0560">Oxidoreductase</keyword>
<keyword id="KW-1185">Reference proteome</keyword>
<name>HCAD_PHOLL</name>
<protein>
    <recommendedName>
        <fullName evidence="1">3-phenylpropionate/cinnamic acid dioxygenase ferredoxin--NAD(+) reductase component</fullName>
        <ecNumber evidence="1">1.18.1.3</ecNumber>
    </recommendedName>
</protein>
<accession>Q7N4V5</accession>
<feature type="chain" id="PRO_0000333727" description="3-phenylpropionate/cinnamic acid dioxygenase ferredoxin--NAD(+) reductase component">
    <location>
        <begin position="1"/>
        <end position="394"/>
    </location>
</feature>
<feature type="binding site" evidence="1">
    <location>
        <begin position="5"/>
        <end position="36"/>
    </location>
    <ligand>
        <name>FAD</name>
        <dbReference type="ChEBI" id="CHEBI:57692"/>
    </ligand>
</feature>
<feature type="binding site" evidence="1">
    <location>
        <begin position="146"/>
        <end position="174"/>
    </location>
    <ligand>
        <name>NAD(+)</name>
        <dbReference type="ChEBI" id="CHEBI:57540"/>
    </ligand>
</feature>
<sequence>MRNQTFIIVGAGQAGAMAAATLRQQQFDGDIILIGKEYHAPYERPILSKDYLINPEEAPKYLFSEDFYLEKQIDLRIGQLVSQIMPSKHCVVLENGGKLRYDKLLLTMGARARRFPLLDQLGENIYTLRTLDDAQRLRQAVKKDKRILIVGGGVIGLELAATSCELGANVTVIEQADNIMGRCAPPLLQDYLLNRHQEKGVQFFLDTNIVSAQKQGSELVLILNTGEKVIGDIIIYGIGAEFRDQLAADAGLVTDGGIVIDSRCQTSEPDIFAAGDVCLQREPLTGDLQRRETWENANRQATIAAHAMMGLAPPQPGAPWFWTDQWGINIQMVGNMQAEEWHIQGDLQSDKAILFGTENEVLVGAVAINQGREMRNLRKLLANPAQVVSGVEWA</sequence>
<evidence type="ECO:0000255" key="1">
    <source>
        <dbReference type="HAMAP-Rule" id="MF_01651"/>
    </source>
</evidence>
<dbReference type="EC" id="1.18.1.3" evidence="1"/>
<dbReference type="EMBL" id="BX571866">
    <property type="protein sequence ID" value="CAE14502.1"/>
    <property type="molecule type" value="Genomic_DNA"/>
</dbReference>
<dbReference type="RefSeq" id="WP_011146461.1">
    <property type="nucleotide sequence ID" value="NC_005126.1"/>
</dbReference>
<dbReference type="SMR" id="Q7N4V5"/>
<dbReference type="STRING" id="243265.plu2209"/>
<dbReference type="GeneID" id="48848485"/>
<dbReference type="KEGG" id="plu:plu2209"/>
<dbReference type="eggNOG" id="COG0446">
    <property type="taxonomic scope" value="Bacteria"/>
</dbReference>
<dbReference type="HOGENOM" id="CLU_003291_4_0_6"/>
<dbReference type="OrthoDB" id="9768666at2"/>
<dbReference type="UniPathway" id="UPA00714"/>
<dbReference type="Proteomes" id="UP000002514">
    <property type="component" value="Chromosome"/>
</dbReference>
<dbReference type="GO" id="GO:0005737">
    <property type="term" value="C:cytoplasm"/>
    <property type="evidence" value="ECO:0007669"/>
    <property type="project" value="TreeGrafter"/>
</dbReference>
<dbReference type="GO" id="GO:0008695">
    <property type="term" value="F:3-phenylpropionate dioxygenase activity"/>
    <property type="evidence" value="ECO:0007669"/>
    <property type="project" value="UniProtKB-UniRule"/>
</dbReference>
<dbReference type="GO" id="GO:0008860">
    <property type="term" value="F:ferredoxin-NAD+ reductase activity"/>
    <property type="evidence" value="ECO:0007669"/>
    <property type="project" value="UniProtKB-EC"/>
</dbReference>
<dbReference type="GO" id="GO:0016651">
    <property type="term" value="F:oxidoreductase activity, acting on NAD(P)H"/>
    <property type="evidence" value="ECO:0007669"/>
    <property type="project" value="TreeGrafter"/>
</dbReference>
<dbReference type="GO" id="GO:0019380">
    <property type="term" value="P:3-phenylpropionate catabolic process"/>
    <property type="evidence" value="ECO:0007669"/>
    <property type="project" value="UniProtKB-UniRule"/>
</dbReference>
<dbReference type="Gene3D" id="3.30.390.30">
    <property type="match status" value="1"/>
</dbReference>
<dbReference type="Gene3D" id="3.50.50.60">
    <property type="entry name" value="FAD/NAD(P)-binding domain"/>
    <property type="match status" value="2"/>
</dbReference>
<dbReference type="HAMAP" id="MF_01651">
    <property type="entry name" value="HcaD"/>
    <property type="match status" value="1"/>
</dbReference>
<dbReference type="InterPro" id="IPR050446">
    <property type="entry name" value="FAD-oxidoreductase/Apoptosis"/>
</dbReference>
<dbReference type="InterPro" id="IPR036188">
    <property type="entry name" value="FAD/NAD-bd_sf"/>
</dbReference>
<dbReference type="InterPro" id="IPR023753">
    <property type="entry name" value="FAD/NAD-binding_dom"/>
</dbReference>
<dbReference type="InterPro" id="IPR016156">
    <property type="entry name" value="FAD/NAD-linked_Rdtase_dimer_sf"/>
</dbReference>
<dbReference type="InterPro" id="IPR023744">
    <property type="entry name" value="HcaD"/>
</dbReference>
<dbReference type="InterPro" id="IPR028202">
    <property type="entry name" value="Reductase_C"/>
</dbReference>
<dbReference type="InterPro" id="IPR053382">
    <property type="entry name" value="Ring-hydroxylating_dioxygenase"/>
</dbReference>
<dbReference type="NCBIfam" id="NF042949">
    <property type="entry name" value="3PPDioc_HcaD"/>
    <property type="match status" value="1"/>
</dbReference>
<dbReference type="NCBIfam" id="NF007286">
    <property type="entry name" value="PRK09754.1"/>
    <property type="match status" value="1"/>
</dbReference>
<dbReference type="PANTHER" id="PTHR43557">
    <property type="entry name" value="APOPTOSIS-INDUCING FACTOR 1"/>
    <property type="match status" value="1"/>
</dbReference>
<dbReference type="PANTHER" id="PTHR43557:SF2">
    <property type="entry name" value="RIESKE DOMAIN-CONTAINING PROTEIN-RELATED"/>
    <property type="match status" value="1"/>
</dbReference>
<dbReference type="Pfam" id="PF07992">
    <property type="entry name" value="Pyr_redox_2"/>
    <property type="match status" value="1"/>
</dbReference>
<dbReference type="Pfam" id="PF14759">
    <property type="entry name" value="Reductase_C"/>
    <property type="match status" value="1"/>
</dbReference>
<dbReference type="PRINTS" id="PR00368">
    <property type="entry name" value="FADPNR"/>
</dbReference>
<dbReference type="PRINTS" id="PR00411">
    <property type="entry name" value="PNDRDTASEI"/>
</dbReference>
<dbReference type="SUPFAM" id="SSF51905">
    <property type="entry name" value="FAD/NAD(P)-binding domain"/>
    <property type="match status" value="1"/>
</dbReference>
<dbReference type="SUPFAM" id="SSF55424">
    <property type="entry name" value="FAD/NAD-linked reductases, dimerisation (C-terminal) domain"/>
    <property type="match status" value="1"/>
</dbReference>
<comment type="function">
    <text evidence="1">Part of the multicomponent 3-phenylpropionate dioxygenase, that converts 3-phenylpropionic acid (PP) and cinnamic acid (CI) into 3-phenylpropionate-dihydrodiol (PP-dihydrodiol) and cinnamic acid-dihydrodiol (CI-dihydrodiol), respectively.</text>
</comment>
<comment type="catalytic activity">
    <reaction evidence="1">
        <text>2 reduced [2Fe-2S]-[ferredoxin] + NAD(+) + H(+) = 2 oxidized [2Fe-2S]-[ferredoxin] + NADH</text>
        <dbReference type="Rhea" id="RHEA:16521"/>
        <dbReference type="Rhea" id="RHEA-COMP:10000"/>
        <dbReference type="Rhea" id="RHEA-COMP:10001"/>
        <dbReference type="ChEBI" id="CHEBI:15378"/>
        <dbReference type="ChEBI" id="CHEBI:33737"/>
        <dbReference type="ChEBI" id="CHEBI:33738"/>
        <dbReference type="ChEBI" id="CHEBI:57540"/>
        <dbReference type="ChEBI" id="CHEBI:57945"/>
        <dbReference type="EC" id="1.18.1.3"/>
    </reaction>
</comment>
<comment type="cofactor">
    <cofactor evidence="1">
        <name>FAD</name>
        <dbReference type="ChEBI" id="CHEBI:57692"/>
    </cofactor>
</comment>
<comment type="pathway">
    <text evidence="1">Aromatic compound metabolism; 3-phenylpropanoate degradation.</text>
</comment>
<comment type="subunit">
    <text evidence="1">This dioxygenase system consists of four proteins: the two subunits of the hydroxylase component (HcaE and HcaF), a ferredoxin (HcaC) and a ferredoxin reductase (HcaD).</text>
</comment>
<comment type="similarity">
    <text evidence="1">Belongs to the bacterial ring-hydroxylating dioxygenase ferredoxin reductase family.</text>
</comment>
<proteinExistence type="inferred from homology"/>
<organism>
    <name type="scientific">Photorhabdus laumondii subsp. laumondii (strain DSM 15139 / CIP 105565 / TT01)</name>
    <name type="common">Photorhabdus luminescens subsp. laumondii</name>
    <dbReference type="NCBI Taxonomy" id="243265"/>
    <lineage>
        <taxon>Bacteria</taxon>
        <taxon>Pseudomonadati</taxon>
        <taxon>Pseudomonadota</taxon>
        <taxon>Gammaproteobacteria</taxon>
        <taxon>Enterobacterales</taxon>
        <taxon>Morganellaceae</taxon>
        <taxon>Photorhabdus</taxon>
    </lineage>
</organism>